<keyword id="KW-0002">3D-structure</keyword>
<keyword id="KW-0119">Carbohydrate metabolism</keyword>
<keyword id="KW-0479">Metal-binding</keyword>
<keyword id="KW-1185">Reference proteome</keyword>
<keyword id="KW-0862">Zinc</keyword>
<evidence type="ECO:0000269" key="1">
    <source>
    </source>
</evidence>
<evidence type="ECO:0000305" key="2"/>
<evidence type="ECO:0007829" key="3">
    <source>
        <dbReference type="PDB" id="3K9T"/>
    </source>
</evidence>
<sequence>MEEINKYIQNSSETGGEIYNLIEELFPICRSITGNGVRKTMDIIRKHIPLEIHEVKSGTKVFDWTVPKEWNIKDAYVRNSKGEKVIDFKENNLHVMSYSVPVHKTMTLDELKPYLHTIPGNKDRIPYLTSYYKENWGFSLTQNKFDELCDDDYEVVIDSSLEDGSLTYGEYYIRGELEEEILLTTYTCHPSMCNDNLSGVALITFIAKALSKLKTKYSYRFLFAPETIGSITWLSRNEDKLKNIKMGLVATCVGDAGIKNYKRTKFGDAEIDKIVEKVLMHCGSEYYVADFFPWGSDERQFSSPGINLPVGSLMRSCYGFDGYHTSADNLCYMNKDGLADSYKTYLEVIYTIENNRTYLNLNPKCEPQLGKRGIYRMIGGGSDYPFDEFAMFWVLNMSDGKNSLLDIAYKSGMEFRRIKYAADALYRVELLKLV</sequence>
<proteinExistence type="evidence at protein level"/>
<dbReference type="EMBL" id="AE001437">
    <property type="protein sequence ID" value="AAK80152.1"/>
    <property type="molecule type" value="Genomic_DNA"/>
</dbReference>
<dbReference type="PIR" id="E97170">
    <property type="entry name" value="E97170"/>
</dbReference>
<dbReference type="RefSeq" id="NP_348812.1">
    <property type="nucleotide sequence ID" value="NC_003030.1"/>
</dbReference>
<dbReference type="RefSeq" id="WP_010965493.1">
    <property type="nucleotide sequence ID" value="NC_003030.1"/>
</dbReference>
<dbReference type="PDB" id="3K9T">
    <property type="method" value="X-ray"/>
    <property type="resolution" value="2.37 A"/>
    <property type="chains" value="A=1-434"/>
</dbReference>
<dbReference type="PDBsum" id="3K9T"/>
<dbReference type="SMR" id="Q97H19"/>
<dbReference type="STRING" id="272562.CA_C2195"/>
<dbReference type="KEGG" id="cac:CA_C2195"/>
<dbReference type="PATRIC" id="fig|272562.8.peg.2396"/>
<dbReference type="eggNOG" id="COG4310">
    <property type="taxonomic scope" value="Bacteria"/>
</dbReference>
<dbReference type="HOGENOM" id="CLU_052015_0_0_9"/>
<dbReference type="OrthoDB" id="9765654at2"/>
<dbReference type="EvolutionaryTrace" id="Q97H19"/>
<dbReference type="Proteomes" id="UP000000814">
    <property type="component" value="Chromosome"/>
</dbReference>
<dbReference type="GO" id="GO:0046872">
    <property type="term" value="F:metal ion binding"/>
    <property type="evidence" value="ECO:0007669"/>
    <property type="project" value="UniProtKB-KW"/>
</dbReference>
<dbReference type="CDD" id="cd05644">
    <property type="entry name" value="M28_like"/>
    <property type="match status" value="1"/>
</dbReference>
<dbReference type="Gene3D" id="3.50.30.90">
    <property type="match status" value="1"/>
</dbReference>
<dbReference type="Gene3D" id="1.10.10.10">
    <property type="entry name" value="Winged helix-like DNA-binding domain superfamily/Winged helix DNA-binding domain"/>
    <property type="match status" value="1"/>
</dbReference>
<dbReference type="Gene3D" id="3.40.630.10">
    <property type="entry name" value="Zn peptidases"/>
    <property type="match status" value="1"/>
</dbReference>
<dbReference type="InterPro" id="IPR032610">
    <property type="entry name" value="DUF2172"/>
</dbReference>
<dbReference type="InterPro" id="IPR032589">
    <property type="entry name" value="DUF4910"/>
</dbReference>
<dbReference type="InterPro" id="IPR012353">
    <property type="entry name" value="UCP015244"/>
</dbReference>
<dbReference type="InterPro" id="IPR032622">
    <property type="entry name" value="UCP01524_HTH"/>
</dbReference>
<dbReference type="InterPro" id="IPR036388">
    <property type="entry name" value="WH-like_DNA-bd_sf"/>
</dbReference>
<dbReference type="Pfam" id="PF09940">
    <property type="entry name" value="DUF2172"/>
    <property type="match status" value="1"/>
</dbReference>
<dbReference type="Pfam" id="PF16254">
    <property type="entry name" value="DUF4910"/>
    <property type="match status" value="1"/>
</dbReference>
<dbReference type="Pfam" id="PF16221">
    <property type="entry name" value="HTH_47"/>
    <property type="match status" value="1"/>
</dbReference>
<dbReference type="PIRSF" id="PIRSF015244">
    <property type="entry name" value="UCP015244"/>
    <property type="match status" value="1"/>
</dbReference>
<dbReference type="SUPFAM" id="SSF53187">
    <property type="entry name" value="Zn-dependent exopeptidases"/>
    <property type="match status" value="1"/>
</dbReference>
<accession>Q97H19</accession>
<organism>
    <name type="scientific">Clostridium acetobutylicum (strain ATCC 824 / DSM 792 / JCM 1419 / IAM 19013 / LMG 5710 / NBRC 13948 / NRRL B-527 / VKM B-1787 / 2291 / W)</name>
    <dbReference type="NCBI Taxonomy" id="272562"/>
    <lineage>
        <taxon>Bacteria</taxon>
        <taxon>Bacillati</taxon>
        <taxon>Bacillota</taxon>
        <taxon>Clostridia</taxon>
        <taxon>Eubacteriales</taxon>
        <taxon>Clostridiaceae</taxon>
        <taxon>Clostridium</taxon>
    </lineage>
</organism>
<gene>
    <name type="ordered locus">CA_C2195</name>
</gene>
<name>PBPAD_CLOAB</name>
<comment type="function">
    <text>The genomic context suggests a role in the biosynthesis of modified polysaccharides; this association with genes involved in carbohydrate metabolism is observed in several phylogenetically distinct taxa. Is not expected to have peptidase activity despite low similarity to aminopeptidases.</text>
</comment>
<comment type="cofactor">
    <cofactor>
        <name>Zn(2+)</name>
        <dbReference type="ChEBI" id="CHEBI:29105"/>
    </cofactor>
    <text>Binds 1 zinc ion per subunit.</text>
</comment>
<comment type="subunit">
    <text evidence="1">Homotrimer.</text>
</comment>
<comment type="domain">
    <text>Contains an N-terminal region with low similarity to aminopeptidases, an insert domain, and a C-terminal permutated winged helix-turn-helix domain.</text>
</comment>
<comment type="similarity">
    <text evidence="2">Belongs to the UPF0770 family.</text>
</comment>
<comment type="caution">
    <text evidence="2">Has distant sequence similarity to aminopeptidases that belong to the MEROPS peptidase family M28, but binds only one zinc ion, contrary to the metallopeptidases of the MEROPS family M28 that bind two catalytic zinc ions. Lacks the active site Asp and Glu residues that are conserved in family members with aminopeptidase activity.</text>
</comment>
<feature type="chain" id="PRO_0000429355" description="Putative polysaccharide biosynthesis protein with aminopeptidase-like domain">
    <location>
        <begin position="1"/>
        <end position="434"/>
    </location>
</feature>
<feature type="region of interest" description="Aminopeptidase-like">
    <location>
        <begin position="1"/>
        <end position="55"/>
    </location>
</feature>
<feature type="region of interest" description="Insert">
    <location>
        <begin position="56"/>
        <end position="164"/>
    </location>
</feature>
<feature type="region of interest" description="Aminopeptidase-like">
    <location>
        <begin position="57"/>
        <end position="355"/>
    </location>
</feature>
<feature type="region of interest" description="Permutated winged helix-turn-helix">
    <location>
        <begin position="356"/>
        <end position="434"/>
    </location>
</feature>
<feature type="binding site" evidence="1">
    <location>
        <position position="189"/>
    </location>
    <ligand>
        <name>Zn(2+)</name>
        <dbReference type="ChEBI" id="CHEBI:29105"/>
    </ligand>
</feature>
<feature type="binding site" evidence="1">
    <location>
        <position position="195"/>
    </location>
    <ligand>
        <name>Zn(2+)</name>
        <dbReference type="ChEBI" id="CHEBI:29105"/>
    </ligand>
</feature>
<feature type="binding site" evidence="1">
    <location>
        <position position="324"/>
    </location>
    <ligand>
        <name>Zn(2+)</name>
        <dbReference type="ChEBI" id="CHEBI:29105"/>
    </ligand>
</feature>
<feature type="helix" evidence="3">
    <location>
        <begin position="1"/>
        <end position="3"/>
    </location>
</feature>
<feature type="helix" evidence="3">
    <location>
        <begin position="4"/>
        <end position="9"/>
    </location>
</feature>
<feature type="helix" evidence="3">
    <location>
        <begin position="11"/>
        <end position="25"/>
    </location>
</feature>
<feature type="strand" evidence="3">
    <location>
        <begin position="32"/>
        <end position="34"/>
    </location>
</feature>
<feature type="helix" evidence="3">
    <location>
        <begin position="35"/>
        <end position="44"/>
    </location>
</feature>
<feature type="turn" evidence="3">
    <location>
        <begin position="45"/>
        <end position="47"/>
    </location>
</feature>
<feature type="strand" evidence="3">
    <location>
        <begin position="51"/>
        <end position="56"/>
    </location>
</feature>
<feature type="strand" evidence="3">
    <location>
        <begin position="69"/>
        <end position="78"/>
    </location>
</feature>
<feature type="strand" evidence="3">
    <location>
        <begin position="84"/>
        <end position="87"/>
    </location>
</feature>
<feature type="turn" evidence="3">
    <location>
        <begin position="88"/>
        <end position="90"/>
    </location>
</feature>
<feature type="helix" evidence="3">
    <location>
        <begin position="92"/>
        <end position="94"/>
    </location>
</feature>
<feature type="strand" evidence="3">
    <location>
        <begin position="102"/>
        <end position="107"/>
    </location>
</feature>
<feature type="helix" evidence="3">
    <location>
        <begin position="108"/>
        <end position="111"/>
    </location>
</feature>
<feature type="helix" evidence="3">
    <location>
        <begin position="112"/>
        <end position="114"/>
    </location>
</feature>
<feature type="strand" evidence="3">
    <location>
        <begin position="131"/>
        <end position="133"/>
    </location>
</feature>
<feature type="helix" evidence="3">
    <location>
        <begin position="142"/>
        <end position="146"/>
    </location>
</feature>
<feature type="strand" evidence="3">
    <location>
        <begin position="150"/>
        <end position="163"/>
    </location>
</feature>
<feature type="strand" evidence="3">
    <location>
        <begin position="165"/>
        <end position="173"/>
    </location>
</feature>
<feature type="strand" evidence="3">
    <location>
        <begin position="176"/>
        <end position="178"/>
    </location>
</feature>
<feature type="strand" evidence="3">
    <location>
        <begin position="180"/>
        <end position="186"/>
    </location>
</feature>
<feature type="turn" evidence="3">
    <location>
        <begin position="193"/>
        <end position="196"/>
    </location>
</feature>
<feature type="helix" evidence="3">
    <location>
        <begin position="197"/>
        <end position="210"/>
    </location>
</feature>
<feature type="strand" evidence="3">
    <location>
        <begin position="216"/>
        <end position="224"/>
    </location>
</feature>
<feature type="helix" evidence="3">
    <location>
        <begin position="228"/>
        <end position="236"/>
    </location>
</feature>
<feature type="helix" evidence="3">
    <location>
        <begin position="238"/>
        <end position="243"/>
    </location>
</feature>
<feature type="strand" evidence="3">
    <location>
        <begin position="244"/>
        <end position="249"/>
    </location>
</feature>
<feature type="strand" evidence="3">
    <location>
        <begin position="255"/>
        <end position="257"/>
    </location>
</feature>
<feature type="strand" evidence="3">
    <location>
        <begin position="259"/>
        <end position="262"/>
    </location>
</feature>
<feature type="strand" evidence="3">
    <location>
        <begin position="267"/>
        <end position="269"/>
    </location>
</feature>
<feature type="helix" evidence="3">
    <location>
        <begin position="270"/>
        <end position="281"/>
    </location>
</feature>
<feature type="strand" evidence="3">
    <location>
        <begin position="282"/>
        <end position="284"/>
    </location>
</feature>
<feature type="strand" evidence="3">
    <location>
        <begin position="286"/>
        <end position="289"/>
    </location>
</feature>
<feature type="helix" evidence="3">
    <location>
        <begin position="298"/>
        <end position="301"/>
    </location>
</feature>
<feature type="turn" evidence="3">
    <location>
        <begin position="304"/>
        <end position="306"/>
    </location>
</feature>
<feature type="strand" evidence="3">
    <location>
        <begin position="310"/>
        <end position="316"/>
    </location>
</feature>
<feature type="turn" evidence="3">
    <location>
        <begin position="321"/>
        <end position="324"/>
    </location>
</feature>
<feature type="helix" evidence="3">
    <location>
        <begin position="330"/>
        <end position="332"/>
    </location>
</feature>
<feature type="helix" evidence="3">
    <location>
        <begin position="335"/>
        <end position="354"/>
    </location>
</feature>
<feature type="strand" evidence="3">
    <location>
        <begin position="357"/>
        <end position="361"/>
    </location>
</feature>
<feature type="helix" evidence="3">
    <location>
        <begin position="388"/>
        <end position="397"/>
    </location>
</feature>
<feature type="strand" evidence="3">
    <location>
        <begin position="399"/>
        <end position="403"/>
    </location>
</feature>
<feature type="helix" evidence="3">
    <location>
        <begin position="404"/>
        <end position="411"/>
    </location>
</feature>
<feature type="helix" evidence="3">
    <location>
        <begin position="415"/>
        <end position="427"/>
    </location>
</feature>
<feature type="strand" evidence="3">
    <location>
        <begin position="431"/>
        <end position="433"/>
    </location>
</feature>
<reference key="1">
    <citation type="journal article" date="2001" name="J. Bacteriol.">
        <title>Genome sequence and comparative analysis of the solvent-producing bacterium Clostridium acetobutylicum.</title>
        <authorList>
            <person name="Noelling J."/>
            <person name="Breton G."/>
            <person name="Omelchenko M.V."/>
            <person name="Makarova K.S."/>
            <person name="Zeng Q."/>
            <person name="Gibson R."/>
            <person name="Lee H.M."/>
            <person name="Dubois J."/>
            <person name="Qiu D."/>
            <person name="Hitti J."/>
            <person name="Wolf Y.I."/>
            <person name="Tatusov R.L."/>
            <person name="Sabathe F."/>
            <person name="Doucette-Stamm L.A."/>
            <person name="Soucaille P."/>
            <person name="Daly M.J."/>
            <person name="Bennett G.N."/>
            <person name="Koonin E.V."/>
            <person name="Smith D.R."/>
        </authorList>
    </citation>
    <scope>NUCLEOTIDE SEQUENCE [LARGE SCALE GENOMIC DNA]</scope>
    <source>
        <strain>ATCC 824 / DSM 792 / JCM 1419 / IAM 19013 / LMG 5710 / NBRC 13948 / NRRL B-527 / VKM B-1787 / 2291 / W</strain>
    </source>
</reference>
<reference key="2">
    <citation type="journal article" date="2014" name="BMC Bioinformatics">
        <title>Structure and computational analysis of a novel protein with metallopeptidase-like and circularly permuted winged-helix-turn-helix domains reveals a possible role in modified polysaccharide biosynthesis.</title>
        <authorList>
            <person name="Das D."/>
            <person name="Murzin A.G."/>
            <person name="Rawlings N.D."/>
            <person name="Finn R.D."/>
            <person name="Coggill P."/>
            <person name="Bateman A."/>
            <person name="Godzik A."/>
            <person name="Aravind L."/>
        </authorList>
    </citation>
    <scope>X-RAY CRYSTALLOGRAPHY (2.37 ANGSTROMS) IN COMPLEX WITH ZINC</scope>
    <scope>SUBUNIT</scope>
    <scope>PUTATIVE FUNCTION</scope>
</reference>
<protein>
    <recommendedName>
        <fullName>Putative polysaccharide biosynthesis protein with aminopeptidase-like domain</fullName>
    </recommendedName>
</protein>